<name>DNAK_SHEPC</name>
<proteinExistence type="inferred from homology"/>
<gene>
    <name evidence="1" type="primary">dnaK</name>
    <name type="ordered locus">Sputcn32_2971</name>
</gene>
<evidence type="ECO:0000255" key="1">
    <source>
        <dbReference type="HAMAP-Rule" id="MF_00332"/>
    </source>
</evidence>
<evidence type="ECO:0000256" key="2">
    <source>
        <dbReference type="SAM" id="MobiDB-lite"/>
    </source>
</evidence>
<reference key="1">
    <citation type="submission" date="2007-04" db="EMBL/GenBank/DDBJ databases">
        <title>Complete sequence of Shewanella putrefaciens CN-32.</title>
        <authorList>
            <consortium name="US DOE Joint Genome Institute"/>
            <person name="Copeland A."/>
            <person name="Lucas S."/>
            <person name="Lapidus A."/>
            <person name="Barry K."/>
            <person name="Detter J.C."/>
            <person name="Glavina del Rio T."/>
            <person name="Hammon N."/>
            <person name="Israni S."/>
            <person name="Dalin E."/>
            <person name="Tice H."/>
            <person name="Pitluck S."/>
            <person name="Chain P."/>
            <person name="Malfatti S."/>
            <person name="Shin M."/>
            <person name="Vergez L."/>
            <person name="Schmutz J."/>
            <person name="Larimer F."/>
            <person name="Land M."/>
            <person name="Hauser L."/>
            <person name="Kyrpides N."/>
            <person name="Mikhailova N."/>
            <person name="Romine M.F."/>
            <person name="Fredrickson J."/>
            <person name="Tiedje J."/>
            <person name="Richardson P."/>
        </authorList>
    </citation>
    <scope>NUCLEOTIDE SEQUENCE [LARGE SCALE GENOMIC DNA]</scope>
    <source>
        <strain>CN-32 / ATCC BAA-453</strain>
    </source>
</reference>
<sequence>MGKIIGIDLGTTNSCVAVLDGGKARVLENAEGDRTTPSIIAYTDDETIVGSPAKRQAVTNPTNTFFAIKRLIGRRFKDDEVQRDVNIMPFKIIQADNGDAWVESRGNKMAPPQVSAEILKKMKKTAEDFLGEEVTEAVITVPAYFNDSQRQATKDAGRIAGLDVKRIINEPTAAALAYGIDKKQGDNIVAVYDLGGGTFDISIIEIDSNDGDQTFEVLATNGDTHLGGEDFDNRLINYLADEFKKEQGLDLRKDPLAMQRLKEAAEKAKIELSSTNHTEVNLPYITADATGPKHLVIKITRAKLESLVEDLILRTLEPLKVALADADLSVSDVNEVILVGGQTRMPKVQEAVTNFFGKEPRKDVNPDEAVAVGAAIQAGVLSGDVKDVLLLDVTPLSLGIETMGSVMTKLIEKNTTIPTKAQQVFSTADDNQSAVTIHVLQGERKQASANKSLGQFNLDGIEPAPRGQPQIEVMFDIDADGILHVSATDKKTGKKQNITIKASSGLSEEEVAQMVRDAEAHADEDKKFEELVQARNQADGLVHATKKQVEEAGDALPSEDKEKIQAAMAAVDTATKGNDKEAIEKASQELIEASAKLMEIAQAKSQAQGGAETNAGKQANAAADDVVDAEFEEVKDDKK</sequence>
<dbReference type="EMBL" id="CP000681">
    <property type="protein sequence ID" value="ABP76686.1"/>
    <property type="molecule type" value="Genomic_DNA"/>
</dbReference>
<dbReference type="SMR" id="A4Y9Q3"/>
<dbReference type="STRING" id="319224.Sputcn32_2971"/>
<dbReference type="KEGG" id="spc:Sputcn32_2971"/>
<dbReference type="eggNOG" id="COG0443">
    <property type="taxonomic scope" value="Bacteria"/>
</dbReference>
<dbReference type="HOGENOM" id="CLU_005965_2_1_6"/>
<dbReference type="GO" id="GO:0005524">
    <property type="term" value="F:ATP binding"/>
    <property type="evidence" value="ECO:0007669"/>
    <property type="project" value="UniProtKB-UniRule"/>
</dbReference>
<dbReference type="GO" id="GO:0140662">
    <property type="term" value="F:ATP-dependent protein folding chaperone"/>
    <property type="evidence" value="ECO:0007669"/>
    <property type="project" value="InterPro"/>
</dbReference>
<dbReference type="GO" id="GO:0051082">
    <property type="term" value="F:unfolded protein binding"/>
    <property type="evidence" value="ECO:0007669"/>
    <property type="project" value="InterPro"/>
</dbReference>
<dbReference type="CDD" id="cd10234">
    <property type="entry name" value="ASKHA_NBD_HSP70_DnaK-like"/>
    <property type="match status" value="1"/>
</dbReference>
<dbReference type="FunFam" id="2.60.34.10:FF:000014">
    <property type="entry name" value="Chaperone protein DnaK HSP70"/>
    <property type="match status" value="1"/>
</dbReference>
<dbReference type="FunFam" id="1.20.1270.10:FF:000001">
    <property type="entry name" value="Molecular chaperone DnaK"/>
    <property type="match status" value="1"/>
</dbReference>
<dbReference type="FunFam" id="3.30.420.40:FF:000004">
    <property type="entry name" value="Molecular chaperone DnaK"/>
    <property type="match status" value="1"/>
</dbReference>
<dbReference type="FunFam" id="3.90.640.10:FF:000003">
    <property type="entry name" value="Molecular chaperone DnaK"/>
    <property type="match status" value="1"/>
</dbReference>
<dbReference type="Gene3D" id="1.20.1270.10">
    <property type="match status" value="1"/>
</dbReference>
<dbReference type="Gene3D" id="3.30.420.40">
    <property type="match status" value="2"/>
</dbReference>
<dbReference type="Gene3D" id="3.90.640.10">
    <property type="entry name" value="Actin, Chain A, domain 4"/>
    <property type="match status" value="1"/>
</dbReference>
<dbReference type="Gene3D" id="2.60.34.10">
    <property type="entry name" value="Substrate Binding Domain Of DNAk, Chain A, domain 1"/>
    <property type="match status" value="1"/>
</dbReference>
<dbReference type="HAMAP" id="MF_00332">
    <property type="entry name" value="DnaK"/>
    <property type="match status" value="1"/>
</dbReference>
<dbReference type="InterPro" id="IPR043129">
    <property type="entry name" value="ATPase_NBD"/>
</dbReference>
<dbReference type="InterPro" id="IPR012725">
    <property type="entry name" value="Chaperone_DnaK"/>
</dbReference>
<dbReference type="InterPro" id="IPR018181">
    <property type="entry name" value="Heat_shock_70_CS"/>
</dbReference>
<dbReference type="InterPro" id="IPR029048">
    <property type="entry name" value="HSP70_C_sf"/>
</dbReference>
<dbReference type="InterPro" id="IPR029047">
    <property type="entry name" value="HSP70_peptide-bd_sf"/>
</dbReference>
<dbReference type="InterPro" id="IPR013126">
    <property type="entry name" value="Hsp_70_fam"/>
</dbReference>
<dbReference type="NCBIfam" id="NF001413">
    <property type="entry name" value="PRK00290.1"/>
    <property type="match status" value="1"/>
</dbReference>
<dbReference type="NCBIfam" id="NF003520">
    <property type="entry name" value="PRK05183.1"/>
    <property type="match status" value="1"/>
</dbReference>
<dbReference type="NCBIfam" id="TIGR02350">
    <property type="entry name" value="prok_dnaK"/>
    <property type="match status" value="1"/>
</dbReference>
<dbReference type="PANTHER" id="PTHR19375">
    <property type="entry name" value="HEAT SHOCK PROTEIN 70KDA"/>
    <property type="match status" value="1"/>
</dbReference>
<dbReference type="Pfam" id="PF00012">
    <property type="entry name" value="HSP70"/>
    <property type="match status" value="1"/>
</dbReference>
<dbReference type="PRINTS" id="PR00301">
    <property type="entry name" value="HEATSHOCK70"/>
</dbReference>
<dbReference type="SUPFAM" id="SSF53067">
    <property type="entry name" value="Actin-like ATPase domain"/>
    <property type="match status" value="2"/>
</dbReference>
<dbReference type="SUPFAM" id="SSF100920">
    <property type="entry name" value="Heat shock protein 70kD (HSP70), peptide-binding domain"/>
    <property type="match status" value="1"/>
</dbReference>
<dbReference type="PROSITE" id="PS00297">
    <property type="entry name" value="HSP70_1"/>
    <property type="match status" value="1"/>
</dbReference>
<dbReference type="PROSITE" id="PS00329">
    <property type="entry name" value="HSP70_2"/>
    <property type="match status" value="1"/>
</dbReference>
<dbReference type="PROSITE" id="PS01036">
    <property type="entry name" value="HSP70_3"/>
    <property type="match status" value="1"/>
</dbReference>
<protein>
    <recommendedName>
        <fullName evidence="1">Chaperone protein DnaK</fullName>
    </recommendedName>
    <alternativeName>
        <fullName evidence="1">HSP70</fullName>
    </alternativeName>
    <alternativeName>
        <fullName evidence="1">Heat shock 70 kDa protein</fullName>
    </alternativeName>
    <alternativeName>
        <fullName evidence="1">Heat shock protein 70</fullName>
    </alternativeName>
</protein>
<organism>
    <name type="scientific">Shewanella putrefaciens (strain CN-32 / ATCC BAA-453)</name>
    <dbReference type="NCBI Taxonomy" id="319224"/>
    <lineage>
        <taxon>Bacteria</taxon>
        <taxon>Pseudomonadati</taxon>
        <taxon>Pseudomonadota</taxon>
        <taxon>Gammaproteobacteria</taxon>
        <taxon>Alteromonadales</taxon>
        <taxon>Shewanellaceae</taxon>
        <taxon>Shewanella</taxon>
    </lineage>
</organism>
<feature type="chain" id="PRO_1000059664" description="Chaperone protein DnaK">
    <location>
        <begin position="1"/>
        <end position="639"/>
    </location>
</feature>
<feature type="region of interest" description="Disordered" evidence="2">
    <location>
        <begin position="605"/>
        <end position="624"/>
    </location>
</feature>
<feature type="modified residue" description="Phosphothreonine; by autocatalysis" evidence="1">
    <location>
        <position position="198"/>
    </location>
</feature>
<keyword id="KW-0067">ATP-binding</keyword>
<keyword id="KW-0143">Chaperone</keyword>
<keyword id="KW-0547">Nucleotide-binding</keyword>
<keyword id="KW-0597">Phosphoprotein</keyword>
<keyword id="KW-0346">Stress response</keyword>
<accession>A4Y9Q3</accession>
<comment type="function">
    <text evidence="1">Acts as a chaperone.</text>
</comment>
<comment type="induction">
    <text evidence="1">By stress conditions e.g. heat shock.</text>
</comment>
<comment type="similarity">
    <text evidence="1">Belongs to the heat shock protein 70 family.</text>
</comment>